<evidence type="ECO:0000255" key="1">
    <source>
        <dbReference type="HAMAP-Rule" id="MF_01227"/>
    </source>
</evidence>
<sequence length="534" mass="59506">MTKYIFVTGGVVSSIGKGIVAASLGRLLKNRGLKVTIQKFDPYINIDPGTMSPYQHGEVYVTDDGAETDLDLGHYERFIDINLNKYSNVTTGKIYSEVLRKERKGEYLGATVQVIPHITDALKEKIKRAASTTDSDVIITEVGGTVGDIESLPFLEALRQMKADVGSENVMYIHTTLLPYLKAAGEMKTKPTQHSVKELRGLGIQPNMLVIRTEEPVEQGIKNKLAQFCDVNSEAVIESRNVEHLYQIPLNLQAQSMDQIVCDHLKLNAPQADMTEWSAMVDKVMNLRKTTKIALVGKYVELPDAYLSVVEALKHSGYANDTAIDLKWVNANDVTVDNAADLLGDADGIIVPGGFGQRGTEGKIQAIRYARENDVPMLGICLGMQLTCVEFARHVLNMEGANSFELEPSTKYPIIDIMRDQIDIEDMGGTLRLGLYPCKLKPGSKAAMAYNNQEVVQRRHRHRYEFNNKFRPEFEAAGFVFSGVSPDNRLVEIVELKEKKFFVAAQYHPELQSRPNRPEELYTAFVTAAIKNSN</sequence>
<protein>
    <recommendedName>
        <fullName evidence="1">CTP synthase</fullName>
        <ecNumber evidence="1">6.3.4.2</ecNumber>
    </recommendedName>
    <alternativeName>
        <fullName evidence="1">Cytidine 5'-triphosphate synthase</fullName>
    </alternativeName>
    <alternativeName>
        <fullName evidence="1">Cytidine triphosphate synthetase</fullName>
        <shortName evidence="1">CTP synthetase</shortName>
        <shortName evidence="1">CTPS</shortName>
    </alternativeName>
    <alternativeName>
        <fullName evidence="1">UTP--ammonia ligase</fullName>
    </alternativeName>
</protein>
<name>PYRG_STRPM</name>
<reference key="1">
    <citation type="journal article" date="2005" name="J. Infect. Dis.">
        <title>Genome sequence of a serotype M28 strain of group A Streptococcus: potential new insights into puerperal sepsis and bacterial disease specificity.</title>
        <authorList>
            <person name="Green N.M."/>
            <person name="Zhang S."/>
            <person name="Porcella S.F."/>
            <person name="Nagiec M.J."/>
            <person name="Barbian K.D."/>
            <person name="Beres S.B."/>
            <person name="Lefebvre R.B."/>
            <person name="Musser J.M."/>
        </authorList>
    </citation>
    <scope>NUCLEOTIDE SEQUENCE [LARGE SCALE GENOMIC DNA]</scope>
    <source>
        <strain>MGAS6180</strain>
    </source>
</reference>
<proteinExistence type="inferred from homology"/>
<organism>
    <name type="scientific">Streptococcus pyogenes serotype M28 (strain MGAS6180)</name>
    <dbReference type="NCBI Taxonomy" id="319701"/>
    <lineage>
        <taxon>Bacteria</taxon>
        <taxon>Bacillati</taxon>
        <taxon>Bacillota</taxon>
        <taxon>Bacilli</taxon>
        <taxon>Lactobacillales</taxon>
        <taxon>Streptococcaceae</taxon>
        <taxon>Streptococcus</taxon>
    </lineage>
</organism>
<comment type="function">
    <text evidence="1">Catalyzes the ATP-dependent amination of UTP to CTP with either L-glutamine or ammonia as the source of nitrogen. Regulates intracellular CTP levels through interactions with the four ribonucleotide triphosphates.</text>
</comment>
<comment type="catalytic activity">
    <reaction evidence="1">
        <text>UTP + L-glutamine + ATP + H2O = CTP + L-glutamate + ADP + phosphate + 2 H(+)</text>
        <dbReference type="Rhea" id="RHEA:26426"/>
        <dbReference type="ChEBI" id="CHEBI:15377"/>
        <dbReference type="ChEBI" id="CHEBI:15378"/>
        <dbReference type="ChEBI" id="CHEBI:29985"/>
        <dbReference type="ChEBI" id="CHEBI:30616"/>
        <dbReference type="ChEBI" id="CHEBI:37563"/>
        <dbReference type="ChEBI" id="CHEBI:43474"/>
        <dbReference type="ChEBI" id="CHEBI:46398"/>
        <dbReference type="ChEBI" id="CHEBI:58359"/>
        <dbReference type="ChEBI" id="CHEBI:456216"/>
        <dbReference type="EC" id="6.3.4.2"/>
    </reaction>
</comment>
<comment type="catalytic activity">
    <reaction evidence="1">
        <text>L-glutamine + H2O = L-glutamate + NH4(+)</text>
        <dbReference type="Rhea" id="RHEA:15889"/>
        <dbReference type="ChEBI" id="CHEBI:15377"/>
        <dbReference type="ChEBI" id="CHEBI:28938"/>
        <dbReference type="ChEBI" id="CHEBI:29985"/>
        <dbReference type="ChEBI" id="CHEBI:58359"/>
    </reaction>
</comment>
<comment type="catalytic activity">
    <reaction evidence="1">
        <text>UTP + NH4(+) + ATP = CTP + ADP + phosphate + 2 H(+)</text>
        <dbReference type="Rhea" id="RHEA:16597"/>
        <dbReference type="ChEBI" id="CHEBI:15378"/>
        <dbReference type="ChEBI" id="CHEBI:28938"/>
        <dbReference type="ChEBI" id="CHEBI:30616"/>
        <dbReference type="ChEBI" id="CHEBI:37563"/>
        <dbReference type="ChEBI" id="CHEBI:43474"/>
        <dbReference type="ChEBI" id="CHEBI:46398"/>
        <dbReference type="ChEBI" id="CHEBI:456216"/>
    </reaction>
</comment>
<comment type="activity regulation">
    <text evidence="1">Allosterically activated by GTP, when glutamine is the substrate; GTP has no effect on the reaction when ammonia is the substrate. The allosteric effector GTP functions by stabilizing the protein conformation that binds the tetrahedral intermediate(s) formed during glutamine hydrolysis. Inhibited by the product CTP, via allosteric rather than competitive inhibition.</text>
</comment>
<comment type="pathway">
    <text evidence="1">Pyrimidine metabolism; CTP biosynthesis via de novo pathway; CTP from UDP: step 2/2.</text>
</comment>
<comment type="subunit">
    <text evidence="1">Homotetramer.</text>
</comment>
<comment type="miscellaneous">
    <text evidence="1">CTPSs have evolved a hybrid strategy for distinguishing between UTP and CTP. The overlapping regions of the product feedback inhibitory and substrate sites recognize a common feature in both compounds, the triphosphate moiety. To differentiate isosteric substrate and product pyrimidine rings, an additional pocket far from the expected kinase/ligase catalytic site, specifically recognizes the cytosine and ribose portions of the product inhibitor.</text>
</comment>
<comment type="similarity">
    <text evidence="1">Belongs to the CTP synthase family.</text>
</comment>
<feature type="chain" id="PRO_0000266234" description="CTP synthase">
    <location>
        <begin position="1"/>
        <end position="534"/>
    </location>
</feature>
<feature type="domain" description="Glutamine amidotransferase type-1" evidence="1">
    <location>
        <begin position="292"/>
        <end position="534"/>
    </location>
</feature>
<feature type="region of interest" description="Amidoligase domain" evidence="1">
    <location>
        <begin position="1"/>
        <end position="267"/>
    </location>
</feature>
<feature type="active site" description="Nucleophile; for glutamine hydrolysis" evidence="1">
    <location>
        <position position="381"/>
    </location>
</feature>
<feature type="active site" evidence="1">
    <location>
        <position position="508"/>
    </location>
</feature>
<feature type="active site" evidence="1">
    <location>
        <position position="510"/>
    </location>
</feature>
<feature type="binding site" evidence="1">
    <location>
        <position position="13"/>
    </location>
    <ligand>
        <name>CTP</name>
        <dbReference type="ChEBI" id="CHEBI:37563"/>
        <note>allosteric inhibitor</note>
    </ligand>
</feature>
<feature type="binding site" evidence="1">
    <location>
        <position position="13"/>
    </location>
    <ligand>
        <name>UTP</name>
        <dbReference type="ChEBI" id="CHEBI:46398"/>
    </ligand>
</feature>
<feature type="binding site" evidence="1">
    <location>
        <begin position="14"/>
        <end position="19"/>
    </location>
    <ligand>
        <name>ATP</name>
        <dbReference type="ChEBI" id="CHEBI:30616"/>
    </ligand>
</feature>
<feature type="binding site" evidence="1">
    <location>
        <position position="54"/>
    </location>
    <ligand>
        <name>L-glutamine</name>
        <dbReference type="ChEBI" id="CHEBI:58359"/>
    </ligand>
</feature>
<feature type="binding site" evidence="1">
    <location>
        <position position="71"/>
    </location>
    <ligand>
        <name>ATP</name>
        <dbReference type="ChEBI" id="CHEBI:30616"/>
    </ligand>
</feature>
<feature type="binding site" evidence="1">
    <location>
        <position position="71"/>
    </location>
    <ligand>
        <name>Mg(2+)</name>
        <dbReference type="ChEBI" id="CHEBI:18420"/>
    </ligand>
</feature>
<feature type="binding site" evidence="1">
    <location>
        <position position="141"/>
    </location>
    <ligand>
        <name>Mg(2+)</name>
        <dbReference type="ChEBI" id="CHEBI:18420"/>
    </ligand>
</feature>
<feature type="binding site" evidence="1">
    <location>
        <begin position="148"/>
        <end position="150"/>
    </location>
    <ligand>
        <name>CTP</name>
        <dbReference type="ChEBI" id="CHEBI:37563"/>
        <note>allosteric inhibitor</note>
    </ligand>
</feature>
<feature type="binding site" evidence="1">
    <location>
        <begin position="188"/>
        <end position="193"/>
    </location>
    <ligand>
        <name>CTP</name>
        <dbReference type="ChEBI" id="CHEBI:37563"/>
        <note>allosteric inhibitor</note>
    </ligand>
</feature>
<feature type="binding site" evidence="1">
    <location>
        <begin position="188"/>
        <end position="193"/>
    </location>
    <ligand>
        <name>UTP</name>
        <dbReference type="ChEBI" id="CHEBI:46398"/>
    </ligand>
</feature>
<feature type="binding site" evidence="1">
    <location>
        <position position="224"/>
    </location>
    <ligand>
        <name>CTP</name>
        <dbReference type="ChEBI" id="CHEBI:37563"/>
        <note>allosteric inhibitor</note>
    </ligand>
</feature>
<feature type="binding site" evidence="1">
    <location>
        <position position="224"/>
    </location>
    <ligand>
        <name>UTP</name>
        <dbReference type="ChEBI" id="CHEBI:46398"/>
    </ligand>
</feature>
<feature type="binding site" evidence="1">
    <location>
        <begin position="240"/>
        <end position="242"/>
    </location>
    <ligand>
        <name>ATP</name>
        <dbReference type="ChEBI" id="CHEBI:30616"/>
    </ligand>
</feature>
<feature type="binding site" evidence="1">
    <location>
        <position position="354"/>
    </location>
    <ligand>
        <name>L-glutamine</name>
        <dbReference type="ChEBI" id="CHEBI:58359"/>
    </ligand>
</feature>
<feature type="binding site" evidence="1">
    <location>
        <begin position="382"/>
        <end position="385"/>
    </location>
    <ligand>
        <name>L-glutamine</name>
        <dbReference type="ChEBI" id="CHEBI:58359"/>
    </ligand>
</feature>
<feature type="binding site" evidence="1">
    <location>
        <position position="405"/>
    </location>
    <ligand>
        <name>L-glutamine</name>
        <dbReference type="ChEBI" id="CHEBI:58359"/>
    </ligand>
</feature>
<feature type="binding site" evidence="1">
    <location>
        <position position="463"/>
    </location>
    <ligand>
        <name>L-glutamine</name>
        <dbReference type="ChEBI" id="CHEBI:58359"/>
    </ligand>
</feature>
<gene>
    <name evidence="1" type="primary">pyrG</name>
    <name type="ordered locus">M28_Spy1599</name>
</gene>
<accession>Q48RF1</accession>
<keyword id="KW-0067">ATP-binding</keyword>
<keyword id="KW-0315">Glutamine amidotransferase</keyword>
<keyword id="KW-0436">Ligase</keyword>
<keyword id="KW-0460">Magnesium</keyword>
<keyword id="KW-0479">Metal-binding</keyword>
<keyword id="KW-0547">Nucleotide-binding</keyword>
<keyword id="KW-0665">Pyrimidine biosynthesis</keyword>
<dbReference type="EC" id="6.3.4.2" evidence="1"/>
<dbReference type="EMBL" id="CP000056">
    <property type="protein sequence ID" value="AAX72709.1"/>
    <property type="molecule type" value="Genomic_DNA"/>
</dbReference>
<dbReference type="RefSeq" id="WP_011285156.1">
    <property type="nucleotide sequence ID" value="NC_007296.2"/>
</dbReference>
<dbReference type="SMR" id="Q48RF1"/>
<dbReference type="MEROPS" id="C26.964"/>
<dbReference type="KEGG" id="spb:M28_Spy1599"/>
<dbReference type="HOGENOM" id="CLU_011675_5_0_9"/>
<dbReference type="UniPathway" id="UPA00159">
    <property type="reaction ID" value="UER00277"/>
</dbReference>
<dbReference type="GO" id="GO:0005829">
    <property type="term" value="C:cytosol"/>
    <property type="evidence" value="ECO:0007669"/>
    <property type="project" value="TreeGrafter"/>
</dbReference>
<dbReference type="GO" id="GO:0005524">
    <property type="term" value="F:ATP binding"/>
    <property type="evidence" value="ECO:0007669"/>
    <property type="project" value="UniProtKB-KW"/>
</dbReference>
<dbReference type="GO" id="GO:0003883">
    <property type="term" value="F:CTP synthase activity"/>
    <property type="evidence" value="ECO:0007669"/>
    <property type="project" value="UniProtKB-UniRule"/>
</dbReference>
<dbReference type="GO" id="GO:0004359">
    <property type="term" value="F:glutaminase activity"/>
    <property type="evidence" value="ECO:0007669"/>
    <property type="project" value="RHEA"/>
</dbReference>
<dbReference type="GO" id="GO:0042802">
    <property type="term" value="F:identical protein binding"/>
    <property type="evidence" value="ECO:0007669"/>
    <property type="project" value="TreeGrafter"/>
</dbReference>
<dbReference type="GO" id="GO:0046872">
    <property type="term" value="F:metal ion binding"/>
    <property type="evidence" value="ECO:0007669"/>
    <property type="project" value="UniProtKB-KW"/>
</dbReference>
<dbReference type="GO" id="GO:0044210">
    <property type="term" value="P:'de novo' CTP biosynthetic process"/>
    <property type="evidence" value="ECO:0007669"/>
    <property type="project" value="UniProtKB-UniRule"/>
</dbReference>
<dbReference type="GO" id="GO:0019856">
    <property type="term" value="P:pyrimidine nucleobase biosynthetic process"/>
    <property type="evidence" value="ECO:0007669"/>
    <property type="project" value="TreeGrafter"/>
</dbReference>
<dbReference type="CDD" id="cd03113">
    <property type="entry name" value="CTPS_N"/>
    <property type="match status" value="1"/>
</dbReference>
<dbReference type="CDD" id="cd01746">
    <property type="entry name" value="GATase1_CTP_Synthase"/>
    <property type="match status" value="1"/>
</dbReference>
<dbReference type="FunFam" id="3.40.50.300:FF:000009">
    <property type="entry name" value="CTP synthase"/>
    <property type="match status" value="1"/>
</dbReference>
<dbReference type="FunFam" id="3.40.50.880:FF:000002">
    <property type="entry name" value="CTP synthase"/>
    <property type="match status" value="1"/>
</dbReference>
<dbReference type="Gene3D" id="3.40.50.880">
    <property type="match status" value="1"/>
</dbReference>
<dbReference type="Gene3D" id="3.40.50.300">
    <property type="entry name" value="P-loop containing nucleotide triphosphate hydrolases"/>
    <property type="match status" value="1"/>
</dbReference>
<dbReference type="HAMAP" id="MF_01227">
    <property type="entry name" value="PyrG"/>
    <property type="match status" value="1"/>
</dbReference>
<dbReference type="InterPro" id="IPR029062">
    <property type="entry name" value="Class_I_gatase-like"/>
</dbReference>
<dbReference type="InterPro" id="IPR004468">
    <property type="entry name" value="CTP_synthase"/>
</dbReference>
<dbReference type="InterPro" id="IPR017456">
    <property type="entry name" value="CTP_synthase_N"/>
</dbReference>
<dbReference type="InterPro" id="IPR017926">
    <property type="entry name" value="GATASE"/>
</dbReference>
<dbReference type="InterPro" id="IPR033828">
    <property type="entry name" value="GATase1_CTP_Synthase"/>
</dbReference>
<dbReference type="InterPro" id="IPR027417">
    <property type="entry name" value="P-loop_NTPase"/>
</dbReference>
<dbReference type="NCBIfam" id="NF003792">
    <property type="entry name" value="PRK05380.1"/>
    <property type="match status" value="1"/>
</dbReference>
<dbReference type="NCBIfam" id="TIGR00337">
    <property type="entry name" value="PyrG"/>
    <property type="match status" value="1"/>
</dbReference>
<dbReference type="PANTHER" id="PTHR11550">
    <property type="entry name" value="CTP SYNTHASE"/>
    <property type="match status" value="1"/>
</dbReference>
<dbReference type="PANTHER" id="PTHR11550:SF0">
    <property type="entry name" value="CTP SYNTHASE-RELATED"/>
    <property type="match status" value="1"/>
</dbReference>
<dbReference type="Pfam" id="PF06418">
    <property type="entry name" value="CTP_synth_N"/>
    <property type="match status" value="1"/>
</dbReference>
<dbReference type="Pfam" id="PF00117">
    <property type="entry name" value="GATase"/>
    <property type="match status" value="1"/>
</dbReference>
<dbReference type="SUPFAM" id="SSF52317">
    <property type="entry name" value="Class I glutamine amidotransferase-like"/>
    <property type="match status" value="1"/>
</dbReference>
<dbReference type="SUPFAM" id="SSF52540">
    <property type="entry name" value="P-loop containing nucleoside triphosphate hydrolases"/>
    <property type="match status" value="1"/>
</dbReference>
<dbReference type="PROSITE" id="PS51273">
    <property type="entry name" value="GATASE_TYPE_1"/>
    <property type="match status" value="1"/>
</dbReference>